<reference key="1">
    <citation type="journal article" date="1999" name="J. Biol. Chem.">
        <title>MAGUIN, a novel neuronal membrane-associated guanylate kinase-interacting protein.</title>
        <authorList>
            <person name="Yao I."/>
            <person name="Hata Y."/>
            <person name="Ide N."/>
            <person name="Hirao K."/>
            <person name="Deguchi M."/>
            <person name="Nishioka H."/>
            <person name="Mizoguchi A."/>
            <person name="Takai Y."/>
        </authorList>
    </citation>
    <scope>NUCLEOTIDE SEQUENCE [MRNA] (ISOFORMS 1 AND 2)</scope>
    <scope>TISSUE SPECIFICITY</scope>
    <scope>INTERACTION WITH DLG4 AND AIP1</scope>
</reference>
<reference key="2">
    <citation type="journal article" date="2012" name="Nat. Commun.">
        <title>Quantitative maps of protein phosphorylation sites across 14 different rat organs and tissues.</title>
        <authorList>
            <person name="Lundby A."/>
            <person name="Secher A."/>
            <person name="Lage K."/>
            <person name="Nordsborg N.B."/>
            <person name="Dmytriyev A."/>
            <person name="Lundby C."/>
            <person name="Olsen J.V."/>
        </authorList>
    </citation>
    <scope>PHOSPHORYLATION [LARGE SCALE ANALYSIS] AT SER-390; SER-685; SER-687; SER-756; SER-767 AND SER-906</scope>
    <scope>IDENTIFICATION BY MASS SPECTROMETRY [LARGE SCALE ANALYSIS]</scope>
</reference>
<dbReference type="EMBL" id="AF102853">
    <property type="protein sequence ID" value="AAD04567.1"/>
    <property type="molecule type" value="mRNA"/>
</dbReference>
<dbReference type="EMBL" id="AF102854">
    <property type="protein sequence ID" value="AAD04568.1"/>
    <property type="molecule type" value="mRNA"/>
</dbReference>
<dbReference type="PIR" id="T18293">
    <property type="entry name" value="T18293"/>
</dbReference>
<dbReference type="RefSeq" id="NP_001106837.1">
    <molecule id="Q9Z1T4-1"/>
    <property type="nucleotide sequence ID" value="NM_001113366.1"/>
</dbReference>
<dbReference type="RefSeq" id="NP_067718.1">
    <molecule id="Q9Z1T4-2"/>
    <property type="nucleotide sequence ID" value="NM_021686.3"/>
</dbReference>
<dbReference type="SMR" id="Q9Z1T4"/>
<dbReference type="BioGRID" id="248765">
    <property type="interactions" value="3"/>
</dbReference>
<dbReference type="FunCoup" id="Q9Z1T4">
    <property type="interactions" value="1537"/>
</dbReference>
<dbReference type="IntAct" id="Q9Z1T4">
    <property type="interactions" value="4"/>
</dbReference>
<dbReference type="MINT" id="Q9Z1T4"/>
<dbReference type="STRING" id="10116.ENSRNOP00000009802"/>
<dbReference type="GlyGen" id="Q9Z1T4">
    <property type="glycosylation" value="1 site"/>
</dbReference>
<dbReference type="iPTMnet" id="Q9Z1T4"/>
<dbReference type="PhosphoSitePlus" id="Q9Z1T4"/>
<dbReference type="PaxDb" id="10116-ENSRNOP00000009802"/>
<dbReference type="Ensembl" id="ENSRNOT00000009802.6">
    <molecule id="Q9Z1T4-1"/>
    <property type="protein sequence ID" value="ENSRNOP00000009802.3"/>
    <property type="gene ID" value="ENSRNOG00000007014.8"/>
</dbReference>
<dbReference type="Ensembl" id="ENSRNOT00000080512.2">
    <molecule id="Q9Z1T4-2"/>
    <property type="protein sequence ID" value="ENSRNOP00000071915.1"/>
    <property type="gene ID" value="ENSRNOG00000007014.8"/>
</dbReference>
<dbReference type="GeneID" id="59322"/>
<dbReference type="KEGG" id="rno:59322"/>
<dbReference type="AGR" id="RGD:708454"/>
<dbReference type="CTD" id="22866"/>
<dbReference type="RGD" id="708454">
    <property type="gene designation" value="Cnksr2"/>
</dbReference>
<dbReference type="eggNOG" id="KOG1738">
    <property type="taxonomic scope" value="Eukaryota"/>
</dbReference>
<dbReference type="GeneTree" id="ENSGT00940000156709"/>
<dbReference type="InParanoid" id="Q9Z1T4"/>
<dbReference type="OMA" id="XAREGEV"/>
<dbReference type="OrthoDB" id="74412at2759"/>
<dbReference type="PhylomeDB" id="Q9Z1T4"/>
<dbReference type="TreeFam" id="TF326495"/>
<dbReference type="Reactome" id="R-RNO-5674135">
    <property type="pathway name" value="MAP2K and MAPK activation"/>
</dbReference>
<dbReference type="PRO" id="PR:Q9Z1T4"/>
<dbReference type="Proteomes" id="UP000002494">
    <property type="component" value="Chromosome X"/>
</dbReference>
<dbReference type="Bgee" id="ENSRNOG00000007014">
    <property type="expression patterns" value="Expressed in frontal cortex and 9 other cell types or tissues"/>
</dbReference>
<dbReference type="GO" id="GO:0005737">
    <property type="term" value="C:cytoplasm"/>
    <property type="evidence" value="ECO:0007669"/>
    <property type="project" value="UniProtKB-SubCell"/>
</dbReference>
<dbReference type="GO" id="GO:0099147">
    <property type="term" value="C:extrinsic component of postsynaptic density membrane"/>
    <property type="evidence" value="ECO:0000314"/>
    <property type="project" value="SynGO"/>
</dbReference>
<dbReference type="GO" id="GO:0098978">
    <property type="term" value="C:glutamatergic synapse"/>
    <property type="evidence" value="ECO:0000314"/>
    <property type="project" value="SynGO"/>
</dbReference>
<dbReference type="GO" id="GO:0043025">
    <property type="term" value="C:neuronal cell body"/>
    <property type="evidence" value="ECO:0000314"/>
    <property type="project" value="RGD"/>
</dbReference>
<dbReference type="GO" id="GO:0005886">
    <property type="term" value="C:plasma membrane"/>
    <property type="evidence" value="ECO:0000266"/>
    <property type="project" value="RGD"/>
</dbReference>
<dbReference type="GO" id="GO:0014069">
    <property type="term" value="C:postsynaptic density"/>
    <property type="evidence" value="ECO:0000266"/>
    <property type="project" value="RGD"/>
</dbReference>
<dbReference type="GO" id="GO:0045211">
    <property type="term" value="C:postsynaptic membrane"/>
    <property type="evidence" value="ECO:0000314"/>
    <property type="project" value="RGD"/>
</dbReference>
<dbReference type="GO" id="GO:0042802">
    <property type="term" value="F:identical protein binding"/>
    <property type="evidence" value="ECO:0000353"/>
    <property type="project" value="IntAct"/>
</dbReference>
<dbReference type="GO" id="GO:0019901">
    <property type="term" value="F:protein kinase binding"/>
    <property type="evidence" value="ECO:0000266"/>
    <property type="project" value="RGD"/>
</dbReference>
<dbReference type="GO" id="GO:0035556">
    <property type="term" value="P:intracellular signal transduction"/>
    <property type="evidence" value="ECO:0000266"/>
    <property type="project" value="RGD"/>
</dbReference>
<dbReference type="GO" id="GO:0099173">
    <property type="term" value="P:postsynapse organization"/>
    <property type="evidence" value="ECO:0000314"/>
    <property type="project" value="SynGO"/>
</dbReference>
<dbReference type="GO" id="GO:0099084">
    <property type="term" value="P:postsynaptic specialization organization"/>
    <property type="evidence" value="ECO:0000314"/>
    <property type="project" value="SynGO"/>
</dbReference>
<dbReference type="GO" id="GO:0009966">
    <property type="term" value="P:regulation of signal transduction"/>
    <property type="evidence" value="ECO:0007669"/>
    <property type="project" value="InterPro"/>
</dbReference>
<dbReference type="CDD" id="cd06748">
    <property type="entry name" value="PDZ_CNK1_2_3-like"/>
    <property type="match status" value="1"/>
</dbReference>
<dbReference type="CDD" id="cd01260">
    <property type="entry name" value="PH_CNK_mammalian-like"/>
    <property type="match status" value="1"/>
</dbReference>
<dbReference type="CDD" id="cd09511">
    <property type="entry name" value="SAM_CNK1_2_3-suppressor"/>
    <property type="match status" value="1"/>
</dbReference>
<dbReference type="FunFam" id="1.10.150.50:FF:000019">
    <property type="entry name" value="Connector enhancer of kinase suppressor of Ras 2"/>
    <property type="match status" value="1"/>
</dbReference>
<dbReference type="FunFam" id="2.30.29.30:FF:000092">
    <property type="entry name" value="Connector enhancer of kinase suppressor of Ras 2"/>
    <property type="match status" value="1"/>
</dbReference>
<dbReference type="FunFam" id="2.30.42.10:FF:000060">
    <property type="entry name" value="Connector enhancer of kinase suppressor of Ras 2"/>
    <property type="match status" value="1"/>
</dbReference>
<dbReference type="Gene3D" id="2.30.42.10">
    <property type="match status" value="1"/>
</dbReference>
<dbReference type="Gene3D" id="2.30.29.30">
    <property type="entry name" value="Pleckstrin-homology domain (PH domain)/Phosphotyrosine-binding domain (PTB)"/>
    <property type="match status" value="1"/>
</dbReference>
<dbReference type="Gene3D" id="1.10.150.50">
    <property type="entry name" value="Transcription Factor, Ets-1"/>
    <property type="match status" value="1"/>
</dbReference>
<dbReference type="InterPro" id="IPR049628">
    <property type="entry name" value="CNK1-3_SAM"/>
</dbReference>
<dbReference type="InterPro" id="IPR010599">
    <property type="entry name" value="CNK2/3_dom"/>
</dbReference>
<dbReference type="InterPro" id="IPR051566">
    <property type="entry name" value="CNKSR"/>
</dbReference>
<dbReference type="InterPro" id="IPR017874">
    <property type="entry name" value="CRIC_domain"/>
</dbReference>
<dbReference type="InterPro" id="IPR001478">
    <property type="entry name" value="PDZ"/>
</dbReference>
<dbReference type="InterPro" id="IPR036034">
    <property type="entry name" value="PDZ_sf"/>
</dbReference>
<dbReference type="InterPro" id="IPR011993">
    <property type="entry name" value="PH-like_dom_sf"/>
</dbReference>
<dbReference type="InterPro" id="IPR001849">
    <property type="entry name" value="PH_domain"/>
</dbReference>
<dbReference type="InterPro" id="IPR001660">
    <property type="entry name" value="SAM"/>
</dbReference>
<dbReference type="InterPro" id="IPR013761">
    <property type="entry name" value="SAM/pointed_sf"/>
</dbReference>
<dbReference type="PANTHER" id="PTHR12844">
    <property type="entry name" value="CONNECTOR ENCHANCER OF KINASE SUPPRESSOR OF RAS"/>
    <property type="match status" value="1"/>
</dbReference>
<dbReference type="PANTHER" id="PTHR12844:SF21">
    <property type="entry name" value="CONNECTOR ENHANCER OF KINASE SUPPRESSOR OF RAS 2"/>
    <property type="match status" value="1"/>
</dbReference>
<dbReference type="Pfam" id="PF06663">
    <property type="entry name" value="CNK2_3_dom"/>
    <property type="match status" value="1"/>
</dbReference>
<dbReference type="Pfam" id="PF10534">
    <property type="entry name" value="CRIC_ras_sig"/>
    <property type="match status" value="1"/>
</dbReference>
<dbReference type="Pfam" id="PF00595">
    <property type="entry name" value="PDZ"/>
    <property type="match status" value="1"/>
</dbReference>
<dbReference type="Pfam" id="PF00169">
    <property type="entry name" value="PH"/>
    <property type="match status" value="1"/>
</dbReference>
<dbReference type="Pfam" id="PF00536">
    <property type="entry name" value="SAM_1"/>
    <property type="match status" value="1"/>
</dbReference>
<dbReference type="SMART" id="SM00228">
    <property type="entry name" value="PDZ"/>
    <property type="match status" value="1"/>
</dbReference>
<dbReference type="SMART" id="SM00233">
    <property type="entry name" value="PH"/>
    <property type="match status" value="1"/>
</dbReference>
<dbReference type="SMART" id="SM00454">
    <property type="entry name" value="SAM"/>
    <property type="match status" value="1"/>
</dbReference>
<dbReference type="SUPFAM" id="SSF50156">
    <property type="entry name" value="PDZ domain-like"/>
    <property type="match status" value="1"/>
</dbReference>
<dbReference type="SUPFAM" id="SSF50729">
    <property type="entry name" value="PH domain-like"/>
    <property type="match status" value="1"/>
</dbReference>
<dbReference type="SUPFAM" id="SSF47769">
    <property type="entry name" value="SAM/Pointed domain"/>
    <property type="match status" value="1"/>
</dbReference>
<dbReference type="PROSITE" id="PS51290">
    <property type="entry name" value="CRIC"/>
    <property type="match status" value="1"/>
</dbReference>
<dbReference type="PROSITE" id="PS50106">
    <property type="entry name" value="PDZ"/>
    <property type="match status" value="1"/>
</dbReference>
<dbReference type="PROSITE" id="PS50003">
    <property type="entry name" value="PH_DOMAIN"/>
    <property type="match status" value="1"/>
</dbReference>
<dbReference type="PROSITE" id="PS50105">
    <property type="entry name" value="SAM_DOMAIN"/>
    <property type="match status" value="1"/>
</dbReference>
<accession>Q9Z1T4</accession>
<accession>Q9R093</accession>
<protein>
    <recommendedName>
        <fullName>Connector enhancer of kinase suppressor of ras 2</fullName>
        <shortName>Connector enhancer of KSR 2</shortName>
    </recommendedName>
    <alternativeName>
        <fullName>CNK homolog protein 2</fullName>
        <shortName>CNK2</shortName>
    </alternativeName>
    <alternativeName>
        <fullName>Membrane-associated guanylate kinase-interacting protein</fullName>
        <shortName>Maguin</shortName>
    </alternativeName>
</protein>
<proteinExistence type="evidence at protein level"/>
<evidence type="ECO:0000250" key="1"/>
<evidence type="ECO:0000250" key="2">
    <source>
        <dbReference type="UniProtKB" id="Q80YA9"/>
    </source>
</evidence>
<evidence type="ECO:0000255" key="3"/>
<evidence type="ECO:0000255" key="4">
    <source>
        <dbReference type="PROSITE-ProRule" id="PRU00143"/>
    </source>
</evidence>
<evidence type="ECO:0000255" key="5">
    <source>
        <dbReference type="PROSITE-ProRule" id="PRU00145"/>
    </source>
</evidence>
<evidence type="ECO:0000255" key="6">
    <source>
        <dbReference type="PROSITE-ProRule" id="PRU00184"/>
    </source>
</evidence>
<evidence type="ECO:0000255" key="7">
    <source>
        <dbReference type="PROSITE-ProRule" id="PRU00621"/>
    </source>
</evidence>
<evidence type="ECO:0000256" key="8">
    <source>
        <dbReference type="SAM" id="MobiDB-lite"/>
    </source>
</evidence>
<evidence type="ECO:0000269" key="9">
    <source>
    </source>
</evidence>
<evidence type="ECO:0000303" key="10">
    <source>
    </source>
</evidence>
<evidence type="ECO:0000305" key="11"/>
<evidence type="ECO:0007744" key="12">
    <source>
    </source>
</evidence>
<comment type="function">
    <text>May function as an adapter protein or regulator of Ras signaling pathways, in synaptic junctions.</text>
</comment>
<comment type="subunit">
    <text evidence="1 9">Interacts with RAF1, RAB2L and RAL GTPase proteins (By similarity). Interacts with DLG4 and AIP1.</text>
</comment>
<comment type="interaction">
    <interactant intactId="EBI-8548356">
        <id>Q9Z1T4</id>
    </interactant>
    <interactant intactId="EBI-8548356">
        <id>Q9Z1T4</id>
        <label>Cnksr2</label>
    </interactant>
    <organismsDiffer>false</organismsDiffer>
    <experiments>2</experiments>
</comment>
<comment type="interaction">
    <interactant intactId="EBI-8548356">
        <id>Q9Z1T4</id>
    </interactant>
    <interactant intactId="EBI-375655">
        <id>P31016</id>
        <label>Dlg4</label>
    </interactant>
    <organismsDiffer>false</organismsDiffer>
    <experiments>4</experiments>
</comment>
<comment type="interaction">
    <interactant intactId="EBI-8548356">
        <id>Q9Z1T4</id>
    </interactant>
    <interactant intactId="EBI-7798464">
        <id>P70587</id>
        <label>Lrrc7</label>
    </interactant>
    <organismsDiffer>false</organismsDiffer>
    <experiments>3</experiments>
</comment>
<comment type="interaction">
    <interactant intactId="EBI-8548356">
        <id>Q9Z1T4</id>
    </interactant>
    <interactant intactId="EBI-524275">
        <id>Q96NW7</id>
        <label>LRRC7</label>
    </interactant>
    <organismsDiffer>true</organismsDiffer>
    <experiments>2</experiments>
</comment>
<comment type="subcellular location">
    <subcellularLocation>
        <location evidence="1">Cytoplasm</location>
    </subcellularLocation>
    <subcellularLocation>
        <location evidence="1">Membrane</location>
        <topology evidence="1">Peripheral membrane protein</topology>
    </subcellularLocation>
</comment>
<comment type="alternative products">
    <event type="alternative splicing"/>
    <isoform>
        <id>Q9Z1T4-1</id>
        <name>1</name>
        <name>Maguin-1</name>
        <sequence type="displayed"/>
    </isoform>
    <isoform>
        <id>Q9Z1T4-2</id>
        <name>2</name>
        <name>Maguin-2</name>
        <sequence type="described" ref="VSP_010891 VSP_010892"/>
    </isoform>
</comment>
<comment type="tissue specificity">
    <text evidence="9">Expressed in neurons and localized in the cell body and neurites.</text>
</comment>
<comment type="PTM">
    <text evidence="1">Phosphorylated on tyrosine.</text>
</comment>
<comment type="similarity">
    <text evidence="11">Belongs to the CNKSR family.</text>
</comment>
<keyword id="KW-0025">Alternative splicing</keyword>
<keyword id="KW-0175">Coiled coil</keyword>
<keyword id="KW-0963">Cytoplasm</keyword>
<keyword id="KW-0472">Membrane</keyword>
<keyword id="KW-0597">Phosphoprotein</keyword>
<keyword id="KW-1185">Reference proteome</keyword>
<name>CNKR2_RAT</name>
<organism>
    <name type="scientific">Rattus norvegicus</name>
    <name type="common">Rat</name>
    <dbReference type="NCBI Taxonomy" id="10116"/>
    <lineage>
        <taxon>Eukaryota</taxon>
        <taxon>Metazoa</taxon>
        <taxon>Chordata</taxon>
        <taxon>Craniata</taxon>
        <taxon>Vertebrata</taxon>
        <taxon>Euteleostomi</taxon>
        <taxon>Mammalia</taxon>
        <taxon>Eutheria</taxon>
        <taxon>Euarchontoglires</taxon>
        <taxon>Glires</taxon>
        <taxon>Rodentia</taxon>
        <taxon>Myomorpha</taxon>
        <taxon>Muroidea</taxon>
        <taxon>Muridae</taxon>
        <taxon>Murinae</taxon>
        <taxon>Rattus</taxon>
    </lineage>
</organism>
<sequence>MALIMEPVSKWSPSQVVDWMKGLDDCLQQYIKNFEREKISGDQLLRITHQELEDLGVSRIGHQELILEAVDLLCALNYGLETENLKTLSHKLNASAKNLQNFITGRRRSGHYDGRTSRKLPNDFLTSVVDLIGAAKSLLAWLDRSPFAAVTDYSVTRNNVIQLCLELTTIVQQDCTVYETENKILHVCKTLSGVCDHIISLSSDPLVSQSAHLEVIQLANIKPSEGLGMYIKSTYDGLHVITGTTENSPADRCKKIHAGDEVIQVNHQTVVGWQLKNLVNALREDPSGVILTLKKRPQSMLTSAPALLKNMRWKPLALQPLIPRSPTSSVATPSSTISTPTKRDSSALQDLYIPPPPAEPYIPRDEKGNLPCEDLRGHMVGKPVHKGSESPNSFLDQEYRKRFNIVEEDTVLYCYEYEKGRSSSQGRRESTPTYGKLRPISMPVEYNWVGDYEDPNKMKRDSRRENSLLRYMSNEKIAQEEYMFQRNSKKDTGKKSKKKGDKSTSPTHYSLLPSLQMDALRQDIMGTPVPETTLYHTFQQSSLQHKSKKKNKGAIAGKSKRRISCKDLGRGDCEGWLWKKKDAKSYFSQKWKKYWFVLKDASLYWYINEEDEKAEGFISLPEFKIDRASECRKKYAFKACHPKIKSFYFAAEHLDDMNRWLNRINMLTAGYAERERIKQEQDYWSESDKEEADTPSTPKQDSPPPPYDTYPRPPSMSCASPYVEAKHSRLSSTETSQSQSSHEEFRQEVTGSSAVSPIRKTASQRRSWQDLIETPLTSSGLHYLQTLPLEDSVFSDSAAISPEHRRQSTLPTQKCHLQDHYGPYPLAESERMQVLNGNGGKPRSFTLPRDSGFNHCCLNAPVSACDPQDDIQPPEVEEEEEEEEEEAAGENIGEKNENREEKLGDSLQDLYRALEEASLSPLGEHRISTKIEYKLSFIKRCNDPVMNEKLHRLRILKSTLKAREGEVAIIDKVLDNPDLTSKEFQQWKQMYLDLFLDICQNTTSNDPLSISSEVDVITSSLTHTHSYIETHV</sequence>
<feature type="chain" id="PRO_0000089972" description="Connector enhancer of kinase suppressor of ras 2">
    <location>
        <begin position="1"/>
        <end position="1032"/>
    </location>
</feature>
<feature type="domain" description="SAM" evidence="6">
    <location>
        <begin position="11"/>
        <end position="76"/>
    </location>
</feature>
<feature type="domain" description="CRIC" evidence="7">
    <location>
        <begin position="84"/>
        <end position="178"/>
    </location>
</feature>
<feature type="domain" description="PDZ" evidence="4">
    <location>
        <begin position="215"/>
        <end position="297"/>
    </location>
</feature>
<feature type="domain" description="DUF1170">
    <location>
        <begin position="332"/>
        <end position="515"/>
    </location>
</feature>
<feature type="domain" description="PH" evidence="5">
    <location>
        <begin position="570"/>
        <end position="669"/>
    </location>
</feature>
<feature type="region of interest" description="Disordered" evidence="8">
    <location>
        <begin position="324"/>
        <end position="349"/>
    </location>
</feature>
<feature type="region of interest" description="Disordered" evidence="8">
    <location>
        <begin position="480"/>
        <end position="509"/>
    </location>
</feature>
<feature type="region of interest" description="Disordered" evidence="8">
    <location>
        <begin position="682"/>
        <end position="766"/>
    </location>
</feature>
<feature type="region of interest" description="Disordered" evidence="8">
    <location>
        <begin position="866"/>
        <end position="900"/>
    </location>
</feature>
<feature type="coiled-coil region" evidence="3">
    <location>
        <begin position="874"/>
        <end position="917"/>
    </location>
</feature>
<feature type="compositionally biased region" description="Low complexity" evidence="8">
    <location>
        <begin position="324"/>
        <end position="340"/>
    </location>
</feature>
<feature type="compositionally biased region" description="Acidic residues" evidence="8">
    <location>
        <begin position="683"/>
        <end position="693"/>
    </location>
</feature>
<feature type="compositionally biased region" description="Pro residues" evidence="8">
    <location>
        <begin position="701"/>
        <end position="714"/>
    </location>
</feature>
<feature type="compositionally biased region" description="Low complexity" evidence="8">
    <location>
        <begin position="730"/>
        <end position="740"/>
    </location>
</feature>
<feature type="compositionally biased region" description="Acidic residues" evidence="8">
    <location>
        <begin position="875"/>
        <end position="888"/>
    </location>
</feature>
<feature type="modified residue" description="Phosphoserine" evidence="2">
    <location>
        <position position="12"/>
    </location>
</feature>
<feature type="modified residue" description="Phosphoserine" evidence="2">
    <location>
        <position position="338"/>
    </location>
</feature>
<feature type="modified residue" description="Phosphoserine" evidence="12">
    <location>
        <position position="390"/>
    </location>
</feature>
<feature type="modified residue" description="Phosphotyrosine" evidence="2">
    <location>
        <position position="683"/>
    </location>
</feature>
<feature type="modified residue" description="Phosphoserine" evidence="12">
    <location>
        <position position="685"/>
    </location>
</feature>
<feature type="modified residue" description="Phosphoserine" evidence="12">
    <location>
        <position position="687"/>
    </location>
</feature>
<feature type="modified residue" description="Phosphoserine" evidence="12">
    <location>
        <position position="756"/>
    </location>
</feature>
<feature type="modified residue" description="Phosphoserine" evidence="12">
    <location>
        <position position="767"/>
    </location>
</feature>
<feature type="modified residue" description="Phosphoserine" evidence="12">
    <location>
        <position position="906"/>
    </location>
</feature>
<feature type="splice variant" id="VSP_010891" description="In isoform 2." evidence="10">
    <original>N</original>
    <variation>S</variation>
    <location>
        <position position="896"/>
    </location>
</feature>
<feature type="splice variant" id="VSP_010892" description="In isoform 2." evidence="10">
    <location>
        <begin position="897"/>
        <end position="1032"/>
    </location>
</feature>
<gene>
    <name type="primary">Cnksr2</name>
</gene>